<comment type="function">
    <text evidence="1">Catalyzes the transfer of a phosphate group to glutamate to form L-glutamate 5-phosphate.</text>
</comment>
<comment type="catalytic activity">
    <reaction evidence="1">
        <text>L-glutamate + ATP = L-glutamyl 5-phosphate + ADP</text>
        <dbReference type="Rhea" id="RHEA:14877"/>
        <dbReference type="ChEBI" id="CHEBI:29985"/>
        <dbReference type="ChEBI" id="CHEBI:30616"/>
        <dbReference type="ChEBI" id="CHEBI:58274"/>
        <dbReference type="ChEBI" id="CHEBI:456216"/>
        <dbReference type="EC" id="2.7.2.11"/>
    </reaction>
</comment>
<comment type="pathway">
    <text evidence="1">Amino-acid biosynthesis; L-proline biosynthesis; L-glutamate 5-semialdehyde from L-glutamate: step 1/2.</text>
</comment>
<comment type="subcellular location">
    <subcellularLocation>
        <location evidence="1">Cytoplasm</location>
    </subcellularLocation>
</comment>
<comment type="similarity">
    <text evidence="1">Belongs to the glutamate 5-kinase family.</text>
</comment>
<sequence length="382" mass="40643">MSSNLLRDAHRIVVKVGSSLVTNEGRGLDEAAIQEWSRQLAALVRGDESHGGQRREVIMVSSGAVAEGMKRLGWAARPKEIHELQAAAAVGQMGLIQMYESKLREQGMGSAQVLLTHADLADRERYLNARNTLLTLLELGIVPVINENDTVVNDEIKFGDNDTLGALVANLIEADALVILTDQRGLYSADPRSNPDARFIDVANAGDPALEEMAGGAGSSIGKGGMITKILAAKRAAGSGASTVIAWGREQDVLVRLAAGESIGTLLVAQTHKNQARKQWIADHLQLRGSVSVDAGAVAKLRDEGKSLLPIGMVNVDGEFARGDVIAVRDALGIEVARGLANYASAEARLLCRKSSVEIERLLGYSAGPEMVHRDNMVIAGH</sequence>
<protein>
    <recommendedName>
        <fullName evidence="1">Glutamate 5-kinase</fullName>
        <ecNumber evidence="1">2.7.2.11</ecNumber>
    </recommendedName>
    <alternativeName>
        <fullName evidence="1">Gamma-glutamyl kinase</fullName>
        <shortName evidence="1">GK</shortName>
    </alternativeName>
</protein>
<gene>
    <name evidence="1" type="primary">proB</name>
    <name type="ordered locus">Daci_5483</name>
</gene>
<organism>
    <name type="scientific">Delftia acidovorans (strain DSM 14801 / SPH-1)</name>
    <dbReference type="NCBI Taxonomy" id="398578"/>
    <lineage>
        <taxon>Bacteria</taxon>
        <taxon>Pseudomonadati</taxon>
        <taxon>Pseudomonadota</taxon>
        <taxon>Betaproteobacteria</taxon>
        <taxon>Burkholderiales</taxon>
        <taxon>Comamonadaceae</taxon>
        <taxon>Delftia</taxon>
    </lineage>
</organism>
<name>PROB_DELAS</name>
<keyword id="KW-0028">Amino-acid biosynthesis</keyword>
<keyword id="KW-0067">ATP-binding</keyword>
<keyword id="KW-0963">Cytoplasm</keyword>
<keyword id="KW-0418">Kinase</keyword>
<keyword id="KW-0547">Nucleotide-binding</keyword>
<keyword id="KW-0641">Proline biosynthesis</keyword>
<keyword id="KW-1185">Reference proteome</keyword>
<keyword id="KW-0808">Transferase</keyword>
<accession>A9BP67</accession>
<feature type="chain" id="PRO_1000125225" description="Glutamate 5-kinase">
    <location>
        <begin position="1"/>
        <end position="382"/>
    </location>
</feature>
<feature type="domain" description="PUA" evidence="1">
    <location>
        <begin position="288"/>
        <end position="366"/>
    </location>
</feature>
<feature type="binding site" evidence="1">
    <location>
        <position position="15"/>
    </location>
    <ligand>
        <name>ATP</name>
        <dbReference type="ChEBI" id="CHEBI:30616"/>
    </ligand>
</feature>
<feature type="binding site" evidence="1">
    <location>
        <position position="62"/>
    </location>
    <ligand>
        <name>substrate</name>
    </ligand>
</feature>
<feature type="binding site" evidence="1">
    <location>
        <position position="149"/>
    </location>
    <ligand>
        <name>substrate</name>
    </ligand>
</feature>
<feature type="binding site" evidence="1">
    <location>
        <position position="161"/>
    </location>
    <ligand>
        <name>substrate</name>
    </ligand>
</feature>
<feature type="binding site" evidence="1">
    <location>
        <begin position="181"/>
        <end position="182"/>
    </location>
    <ligand>
        <name>ATP</name>
        <dbReference type="ChEBI" id="CHEBI:30616"/>
    </ligand>
</feature>
<proteinExistence type="inferred from homology"/>
<dbReference type="EC" id="2.7.2.11" evidence="1"/>
<dbReference type="EMBL" id="CP000884">
    <property type="protein sequence ID" value="ABX38112.1"/>
    <property type="molecule type" value="Genomic_DNA"/>
</dbReference>
<dbReference type="RefSeq" id="WP_012207281.1">
    <property type="nucleotide sequence ID" value="NC_010002.1"/>
</dbReference>
<dbReference type="SMR" id="A9BP67"/>
<dbReference type="STRING" id="398578.Daci_5483"/>
<dbReference type="GeneID" id="24115233"/>
<dbReference type="KEGG" id="dac:Daci_5483"/>
<dbReference type="eggNOG" id="COG0263">
    <property type="taxonomic scope" value="Bacteria"/>
</dbReference>
<dbReference type="HOGENOM" id="CLU_025400_2_0_4"/>
<dbReference type="UniPathway" id="UPA00098">
    <property type="reaction ID" value="UER00359"/>
</dbReference>
<dbReference type="Proteomes" id="UP000000784">
    <property type="component" value="Chromosome"/>
</dbReference>
<dbReference type="GO" id="GO:0005829">
    <property type="term" value="C:cytosol"/>
    <property type="evidence" value="ECO:0007669"/>
    <property type="project" value="TreeGrafter"/>
</dbReference>
<dbReference type="GO" id="GO:0005524">
    <property type="term" value="F:ATP binding"/>
    <property type="evidence" value="ECO:0007669"/>
    <property type="project" value="UniProtKB-KW"/>
</dbReference>
<dbReference type="GO" id="GO:0004349">
    <property type="term" value="F:glutamate 5-kinase activity"/>
    <property type="evidence" value="ECO:0007669"/>
    <property type="project" value="UniProtKB-UniRule"/>
</dbReference>
<dbReference type="GO" id="GO:0003723">
    <property type="term" value="F:RNA binding"/>
    <property type="evidence" value="ECO:0007669"/>
    <property type="project" value="InterPro"/>
</dbReference>
<dbReference type="GO" id="GO:0055129">
    <property type="term" value="P:L-proline biosynthetic process"/>
    <property type="evidence" value="ECO:0007669"/>
    <property type="project" value="UniProtKB-UniRule"/>
</dbReference>
<dbReference type="CDD" id="cd04242">
    <property type="entry name" value="AAK_G5K_ProB"/>
    <property type="match status" value="1"/>
</dbReference>
<dbReference type="CDD" id="cd21157">
    <property type="entry name" value="PUA_G5K"/>
    <property type="match status" value="1"/>
</dbReference>
<dbReference type="FunFam" id="2.30.130.10:FF:000007">
    <property type="entry name" value="Glutamate 5-kinase"/>
    <property type="match status" value="1"/>
</dbReference>
<dbReference type="FunFam" id="3.40.1160.10:FF:000018">
    <property type="entry name" value="Glutamate 5-kinase"/>
    <property type="match status" value="1"/>
</dbReference>
<dbReference type="Gene3D" id="3.40.1160.10">
    <property type="entry name" value="Acetylglutamate kinase-like"/>
    <property type="match status" value="1"/>
</dbReference>
<dbReference type="Gene3D" id="2.30.130.10">
    <property type="entry name" value="PUA domain"/>
    <property type="match status" value="1"/>
</dbReference>
<dbReference type="HAMAP" id="MF_00456">
    <property type="entry name" value="ProB"/>
    <property type="match status" value="1"/>
</dbReference>
<dbReference type="InterPro" id="IPR036393">
    <property type="entry name" value="AceGlu_kinase-like_sf"/>
</dbReference>
<dbReference type="InterPro" id="IPR001048">
    <property type="entry name" value="Asp/Glu/Uridylate_kinase"/>
</dbReference>
<dbReference type="InterPro" id="IPR041739">
    <property type="entry name" value="G5K_ProB"/>
</dbReference>
<dbReference type="InterPro" id="IPR001057">
    <property type="entry name" value="Glu/AcGlu_kinase"/>
</dbReference>
<dbReference type="InterPro" id="IPR011529">
    <property type="entry name" value="Glu_5kinase"/>
</dbReference>
<dbReference type="InterPro" id="IPR005715">
    <property type="entry name" value="Glu_5kinase/COase_Synthase"/>
</dbReference>
<dbReference type="InterPro" id="IPR019797">
    <property type="entry name" value="Glutamate_5-kinase_CS"/>
</dbReference>
<dbReference type="InterPro" id="IPR002478">
    <property type="entry name" value="PUA"/>
</dbReference>
<dbReference type="InterPro" id="IPR015947">
    <property type="entry name" value="PUA-like_sf"/>
</dbReference>
<dbReference type="InterPro" id="IPR036974">
    <property type="entry name" value="PUA_sf"/>
</dbReference>
<dbReference type="NCBIfam" id="TIGR01027">
    <property type="entry name" value="proB"/>
    <property type="match status" value="1"/>
</dbReference>
<dbReference type="PANTHER" id="PTHR43654">
    <property type="entry name" value="GLUTAMATE 5-KINASE"/>
    <property type="match status" value="1"/>
</dbReference>
<dbReference type="PANTHER" id="PTHR43654:SF1">
    <property type="entry name" value="ISOPENTENYL PHOSPHATE KINASE"/>
    <property type="match status" value="1"/>
</dbReference>
<dbReference type="Pfam" id="PF00696">
    <property type="entry name" value="AA_kinase"/>
    <property type="match status" value="1"/>
</dbReference>
<dbReference type="Pfam" id="PF01472">
    <property type="entry name" value="PUA"/>
    <property type="match status" value="1"/>
</dbReference>
<dbReference type="PIRSF" id="PIRSF000729">
    <property type="entry name" value="GK"/>
    <property type="match status" value="1"/>
</dbReference>
<dbReference type="PRINTS" id="PR00474">
    <property type="entry name" value="GLU5KINASE"/>
</dbReference>
<dbReference type="SMART" id="SM00359">
    <property type="entry name" value="PUA"/>
    <property type="match status" value="1"/>
</dbReference>
<dbReference type="SUPFAM" id="SSF53633">
    <property type="entry name" value="Carbamate kinase-like"/>
    <property type="match status" value="1"/>
</dbReference>
<dbReference type="SUPFAM" id="SSF88697">
    <property type="entry name" value="PUA domain-like"/>
    <property type="match status" value="1"/>
</dbReference>
<dbReference type="PROSITE" id="PS00902">
    <property type="entry name" value="GLUTAMATE_5_KINASE"/>
    <property type="match status" value="1"/>
</dbReference>
<dbReference type="PROSITE" id="PS50890">
    <property type="entry name" value="PUA"/>
    <property type="match status" value="1"/>
</dbReference>
<evidence type="ECO:0000255" key="1">
    <source>
        <dbReference type="HAMAP-Rule" id="MF_00456"/>
    </source>
</evidence>
<reference key="1">
    <citation type="submission" date="2007-11" db="EMBL/GenBank/DDBJ databases">
        <title>Complete sequence of Delftia acidovorans DSM 14801 / SPH-1.</title>
        <authorList>
            <person name="Copeland A."/>
            <person name="Lucas S."/>
            <person name="Lapidus A."/>
            <person name="Barry K."/>
            <person name="Glavina del Rio T."/>
            <person name="Dalin E."/>
            <person name="Tice H."/>
            <person name="Pitluck S."/>
            <person name="Lowry S."/>
            <person name="Clum A."/>
            <person name="Schmutz J."/>
            <person name="Larimer F."/>
            <person name="Land M."/>
            <person name="Hauser L."/>
            <person name="Kyrpides N."/>
            <person name="Kim E."/>
            <person name="Schleheck D."/>
            <person name="Richardson P."/>
        </authorList>
    </citation>
    <scope>NUCLEOTIDE SEQUENCE [LARGE SCALE GENOMIC DNA]</scope>
    <source>
        <strain>DSM 14801 / SPH-1</strain>
    </source>
</reference>